<feature type="chain" id="PRO_0000136549" description="Phosphoheptose isomerase">
    <location>
        <begin position="1"/>
        <end position="191"/>
    </location>
</feature>
<feature type="domain" description="SIS" evidence="1">
    <location>
        <begin position="37"/>
        <end position="191"/>
    </location>
</feature>
<feature type="binding site" evidence="1">
    <location>
        <begin position="52"/>
        <end position="54"/>
    </location>
    <ligand>
        <name>substrate</name>
    </ligand>
</feature>
<feature type="binding site" evidence="1">
    <location>
        <position position="61"/>
    </location>
    <ligand>
        <name>Zn(2+)</name>
        <dbReference type="ChEBI" id="CHEBI:29105"/>
    </ligand>
</feature>
<feature type="binding site" evidence="1">
    <location>
        <position position="65"/>
    </location>
    <ligand>
        <name>substrate</name>
    </ligand>
</feature>
<feature type="binding site" evidence="1">
    <location>
        <position position="65"/>
    </location>
    <ligand>
        <name>Zn(2+)</name>
        <dbReference type="ChEBI" id="CHEBI:29105"/>
    </ligand>
</feature>
<feature type="binding site" evidence="1">
    <location>
        <begin position="93"/>
        <end position="94"/>
    </location>
    <ligand>
        <name>substrate</name>
    </ligand>
</feature>
<feature type="binding site" evidence="1">
    <location>
        <begin position="119"/>
        <end position="121"/>
    </location>
    <ligand>
        <name>substrate</name>
    </ligand>
</feature>
<feature type="binding site" evidence="1">
    <location>
        <position position="124"/>
    </location>
    <ligand>
        <name>substrate</name>
    </ligand>
</feature>
<feature type="binding site" evidence="1">
    <location>
        <position position="172"/>
    </location>
    <ligand>
        <name>substrate</name>
    </ligand>
</feature>
<feature type="binding site" evidence="1">
    <location>
        <position position="172"/>
    </location>
    <ligand>
        <name>Zn(2+)</name>
        <dbReference type="ChEBI" id="CHEBI:29105"/>
    </ligand>
</feature>
<feature type="binding site" evidence="1">
    <location>
        <position position="180"/>
    </location>
    <ligand>
        <name>Zn(2+)</name>
        <dbReference type="ChEBI" id="CHEBI:29105"/>
    </ligand>
</feature>
<dbReference type="EC" id="5.3.1.28" evidence="1"/>
<dbReference type="EMBL" id="BA000031">
    <property type="protein sequence ID" value="BAC60551.1"/>
    <property type="molecule type" value="Genomic_DNA"/>
</dbReference>
<dbReference type="RefSeq" id="NP_798667.1">
    <property type="nucleotide sequence ID" value="NC_004603.1"/>
</dbReference>
<dbReference type="SMR" id="Q87MG7"/>
<dbReference type="GeneID" id="1189801"/>
<dbReference type="KEGG" id="vpa:VP2288"/>
<dbReference type="PATRIC" id="fig|223926.6.peg.2190"/>
<dbReference type="eggNOG" id="COG0279">
    <property type="taxonomic scope" value="Bacteria"/>
</dbReference>
<dbReference type="HOGENOM" id="CLU_080999_4_0_6"/>
<dbReference type="UniPathway" id="UPA00041">
    <property type="reaction ID" value="UER00436"/>
</dbReference>
<dbReference type="UniPathway" id="UPA00958"/>
<dbReference type="Proteomes" id="UP000002493">
    <property type="component" value="Chromosome 1"/>
</dbReference>
<dbReference type="GO" id="GO:0005737">
    <property type="term" value="C:cytoplasm"/>
    <property type="evidence" value="ECO:0007669"/>
    <property type="project" value="UniProtKB-SubCell"/>
</dbReference>
<dbReference type="GO" id="GO:0097367">
    <property type="term" value="F:carbohydrate derivative binding"/>
    <property type="evidence" value="ECO:0007669"/>
    <property type="project" value="InterPro"/>
</dbReference>
<dbReference type="GO" id="GO:0008968">
    <property type="term" value="F:D-sedoheptulose 7-phosphate isomerase activity"/>
    <property type="evidence" value="ECO:0007669"/>
    <property type="project" value="UniProtKB-UniRule"/>
</dbReference>
<dbReference type="GO" id="GO:0008270">
    <property type="term" value="F:zinc ion binding"/>
    <property type="evidence" value="ECO:0007669"/>
    <property type="project" value="UniProtKB-UniRule"/>
</dbReference>
<dbReference type="GO" id="GO:2001061">
    <property type="term" value="P:D-glycero-D-manno-heptose 7-phosphate biosynthetic process"/>
    <property type="evidence" value="ECO:0007669"/>
    <property type="project" value="UniProtKB-UniPathway"/>
</dbReference>
<dbReference type="GO" id="GO:0009244">
    <property type="term" value="P:lipopolysaccharide core region biosynthetic process"/>
    <property type="evidence" value="ECO:0007669"/>
    <property type="project" value="UniProtKB-UniPathway"/>
</dbReference>
<dbReference type="CDD" id="cd05006">
    <property type="entry name" value="SIS_GmhA"/>
    <property type="match status" value="1"/>
</dbReference>
<dbReference type="FunFam" id="3.40.50.10490:FF:000013">
    <property type="entry name" value="Phosphoheptose isomerase"/>
    <property type="match status" value="1"/>
</dbReference>
<dbReference type="Gene3D" id="3.40.50.10490">
    <property type="entry name" value="Glucose-6-phosphate isomerase like protein, domain 1"/>
    <property type="match status" value="1"/>
</dbReference>
<dbReference type="HAMAP" id="MF_00067">
    <property type="entry name" value="GmhA"/>
    <property type="match status" value="1"/>
</dbReference>
<dbReference type="InterPro" id="IPR035461">
    <property type="entry name" value="GmhA/DiaA"/>
</dbReference>
<dbReference type="InterPro" id="IPR004515">
    <property type="entry name" value="Phosphoheptose_Isoase"/>
</dbReference>
<dbReference type="InterPro" id="IPR001347">
    <property type="entry name" value="SIS_dom"/>
</dbReference>
<dbReference type="InterPro" id="IPR046348">
    <property type="entry name" value="SIS_dom_sf"/>
</dbReference>
<dbReference type="InterPro" id="IPR050099">
    <property type="entry name" value="SIS_GmhA/DiaA_subfam"/>
</dbReference>
<dbReference type="NCBIfam" id="TIGR00441">
    <property type="entry name" value="gmhA"/>
    <property type="match status" value="1"/>
</dbReference>
<dbReference type="NCBIfam" id="NF001628">
    <property type="entry name" value="PRK00414.1"/>
    <property type="match status" value="1"/>
</dbReference>
<dbReference type="PANTHER" id="PTHR30390:SF7">
    <property type="entry name" value="PHOSPHOHEPTOSE ISOMERASE"/>
    <property type="match status" value="1"/>
</dbReference>
<dbReference type="PANTHER" id="PTHR30390">
    <property type="entry name" value="SEDOHEPTULOSE 7-PHOSPHATE ISOMERASE / DNAA INITIATOR-ASSOCIATING FACTOR FOR REPLICATION INITIATION"/>
    <property type="match status" value="1"/>
</dbReference>
<dbReference type="Pfam" id="PF13580">
    <property type="entry name" value="SIS_2"/>
    <property type="match status" value="1"/>
</dbReference>
<dbReference type="SUPFAM" id="SSF53697">
    <property type="entry name" value="SIS domain"/>
    <property type="match status" value="1"/>
</dbReference>
<dbReference type="PROSITE" id="PS51464">
    <property type="entry name" value="SIS"/>
    <property type="match status" value="1"/>
</dbReference>
<accession>Q87MG7</accession>
<gene>
    <name evidence="1" type="primary">gmhA</name>
    <name type="ordered locus">VP2288</name>
</gene>
<evidence type="ECO:0000255" key="1">
    <source>
        <dbReference type="HAMAP-Rule" id="MF_00067"/>
    </source>
</evidence>
<reference key="1">
    <citation type="journal article" date="2003" name="Lancet">
        <title>Genome sequence of Vibrio parahaemolyticus: a pathogenic mechanism distinct from that of V. cholerae.</title>
        <authorList>
            <person name="Makino K."/>
            <person name="Oshima K."/>
            <person name="Kurokawa K."/>
            <person name="Yokoyama K."/>
            <person name="Uda T."/>
            <person name="Tagomori K."/>
            <person name="Iijima Y."/>
            <person name="Najima M."/>
            <person name="Nakano M."/>
            <person name="Yamashita A."/>
            <person name="Kubota Y."/>
            <person name="Kimura S."/>
            <person name="Yasunaga T."/>
            <person name="Honda T."/>
            <person name="Shinagawa H."/>
            <person name="Hattori M."/>
            <person name="Iida T."/>
        </authorList>
    </citation>
    <scope>NUCLEOTIDE SEQUENCE [LARGE SCALE GENOMIC DNA]</scope>
    <source>
        <strain>RIMD 2210633</strain>
    </source>
</reference>
<protein>
    <recommendedName>
        <fullName evidence="1">Phosphoheptose isomerase</fullName>
        <ecNumber evidence="1">5.3.1.28</ecNumber>
    </recommendedName>
    <alternativeName>
        <fullName evidence="1">Sedoheptulose 7-phosphate isomerase</fullName>
    </alternativeName>
</protein>
<name>GMHA_VIBPA</name>
<proteinExistence type="inferred from homology"/>
<organism>
    <name type="scientific">Vibrio parahaemolyticus serotype O3:K6 (strain RIMD 2210633)</name>
    <dbReference type="NCBI Taxonomy" id="223926"/>
    <lineage>
        <taxon>Bacteria</taxon>
        <taxon>Pseudomonadati</taxon>
        <taxon>Pseudomonadota</taxon>
        <taxon>Gammaproteobacteria</taxon>
        <taxon>Vibrionales</taxon>
        <taxon>Vibrionaceae</taxon>
        <taxon>Vibrio</taxon>
    </lineage>
</organism>
<comment type="function">
    <text evidence="1">Catalyzes the isomerization of sedoheptulose 7-phosphate in D-glycero-D-manno-heptose 7-phosphate.</text>
</comment>
<comment type="catalytic activity">
    <reaction evidence="1">
        <text>2 D-sedoheptulose 7-phosphate = D-glycero-alpha-D-manno-heptose 7-phosphate + D-glycero-beta-D-manno-heptose 7-phosphate</text>
        <dbReference type="Rhea" id="RHEA:27489"/>
        <dbReference type="ChEBI" id="CHEBI:57483"/>
        <dbReference type="ChEBI" id="CHEBI:60203"/>
        <dbReference type="ChEBI" id="CHEBI:60204"/>
        <dbReference type="EC" id="5.3.1.28"/>
    </reaction>
</comment>
<comment type="cofactor">
    <cofactor evidence="1">
        <name>Zn(2+)</name>
        <dbReference type="ChEBI" id="CHEBI:29105"/>
    </cofactor>
    <text evidence="1">Binds 1 zinc ion per subunit.</text>
</comment>
<comment type="pathway">
    <text evidence="1">Carbohydrate biosynthesis; D-glycero-D-manno-heptose 7-phosphate biosynthesis; D-glycero-alpha-D-manno-heptose 7-phosphate and D-glycero-beta-D-manno-heptose 7-phosphate from sedoheptulose 7-phosphate: step 1/1.</text>
</comment>
<comment type="pathway">
    <text>Bacterial outer membrane biogenesis; LPS core biosynthesis.</text>
</comment>
<comment type="subunit">
    <text evidence="1">Homotetramer.</text>
</comment>
<comment type="subcellular location">
    <subcellularLocation>
        <location evidence="1">Cytoplasm</location>
    </subcellularLocation>
</comment>
<comment type="miscellaneous">
    <text evidence="1">The reaction produces a racemic mixture of D-glycero-alpha-D-manno-heptose 7-phosphate and D-glycero-beta-D-manno-heptose 7-phosphate.</text>
</comment>
<comment type="similarity">
    <text evidence="1">Belongs to the SIS family. GmhA subfamily.</text>
</comment>
<sequence>MYQDLIRSELNEAAEVLNKFLSDDHNIAQIEAAAKMIADSFKQDGKVLSCGNGGSHCDAMHFAEELTGRYRDNRPGYAGIAISDPSHLSCVSNDFGYDFVFSRYVEAVGRKGDVLFGLSTSGNSGNILKAIEAAKAKGMKTVALTGKDGGKMAGLADVEIRVPHFGYADRIQEVHIKIIHIIIQLIEKEME</sequence>
<keyword id="KW-0119">Carbohydrate metabolism</keyword>
<keyword id="KW-0963">Cytoplasm</keyword>
<keyword id="KW-0413">Isomerase</keyword>
<keyword id="KW-0448">Lipopolysaccharide biosynthesis</keyword>
<keyword id="KW-0479">Metal-binding</keyword>
<keyword id="KW-0862">Zinc</keyword>